<keyword id="KW-0067">ATP-binding</keyword>
<keyword id="KW-0436">Ligase</keyword>
<keyword id="KW-0547">Nucleotide-binding</keyword>
<keyword id="KW-0658">Purine biosynthesis</keyword>
<comment type="catalytic activity">
    <reaction evidence="1">
        <text>5-amino-1-(5-phospho-D-ribosyl)imidazole-4-carboxylate + L-aspartate + ATP = (2S)-2-[5-amino-1-(5-phospho-beta-D-ribosyl)imidazole-4-carboxamido]succinate + ADP + phosphate + 2 H(+)</text>
        <dbReference type="Rhea" id="RHEA:22628"/>
        <dbReference type="ChEBI" id="CHEBI:15378"/>
        <dbReference type="ChEBI" id="CHEBI:29991"/>
        <dbReference type="ChEBI" id="CHEBI:30616"/>
        <dbReference type="ChEBI" id="CHEBI:43474"/>
        <dbReference type="ChEBI" id="CHEBI:58443"/>
        <dbReference type="ChEBI" id="CHEBI:77657"/>
        <dbReference type="ChEBI" id="CHEBI:456216"/>
        <dbReference type="EC" id="6.3.2.6"/>
    </reaction>
</comment>
<comment type="pathway">
    <text evidence="1">Purine metabolism; IMP biosynthesis via de novo pathway; 5-amino-1-(5-phospho-D-ribosyl)imidazole-4-carboxamide from 5-amino-1-(5-phospho-D-ribosyl)imidazole-4-carboxylate: step 1/2.</text>
</comment>
<comment type="similarity">
    <text evidence="1">Belongs to the SAICAR synthetase family.</text>
</comment>
<evidence type="ECO:0000255" key="1">
    <source>
        <dbReference type="HAMAP-Rule" id="MF_00137"/>
    </source>
</evidence>
<feature type="chain" id="PRO_1000122906" description="Phosphoribosylaminoimidazole-succinocarboxamide synthase">
    <location>
        <begin position="1"/>
        <end position="254"/>
    </location>
</feature>
<dbReference type="EC" id="6.3.2.6" evidence="1"/>
<dbReference type="EMBL" id="CP001488">
    <property type="protein sequence ID" value="ACO00634.1"/>
    <property type="molecule type" value="Genomic_DNA"/>
</dbReference>
<dbReference type="RefSeq" id="WP_002963974.1">
    <property type="nucleotide sequence ID" value="NC_012441.1"/>
</dbReference>
<dbReference type="SMR" id="C0RIH6"/>
<dbReference type="GeneID" id="29593967"/>
<dbReference type="KEGG" id="bmi:BMEA_A0881"/>
<dbReference type="HOGENOM" id="CLU_061495_2_0_5"/>
<dbReference type="UniPathway" id="UPA00074">
    <property type="reaction ID" value="UER00131"/>
</dbReference>
<dbReference type="Proteomes" id="UP000001748">
    <property type="component" value="Chromosome I"/>
</dbReference>
<dbReference type="GO" id="GO:0005829">
    <property type="term" value="C:cytosol"/>
    <property type="evidence" value="ECO:0007669"/>
    <property type="project" value="TreeGrafter"/>
</dbReference>
<dbReference type="GO" id="GO:0005524">
    <property type="term" value="F:ATP binding"/>
    <property type="evidence" value="ECO:0007669"/>
    <property type="project" value="UniProtKB-KW"/>
</dbReference>
<dbReference type="GO" id="GO:0004639">
    <property type="term" value="F:phosphoribosylaminoimidazolesuccinocarboxamide synthase activity"/>
    <property type="evidence" value="ECO:0007669"/>
    <property type="project" value="UniProtKB-UniRule"/>
</dbReference>
<dbReference type="GO" id="GO:0006189">
    <property type="term" value="P:'de novo' IMP biosynthetic process"/>
    <property type="evidence" value="ECO:0007669"/>
    <property type="project" value="UniProtKB-UniRule"/>
</dbReference>
<dbReference type="GO" id="GO:0009236">
    <property type="term" value="P:cobalamin biosynthetic process"/>
    <property type="evidence" value="ECO:0007669"/>
    <property type="project" value="InterPro"/>
</dbReference>
<dbReference type="CDD" id="cd01415">
    <property type="entry name" value="SAICAR_synt_PurC"/>
    <property type="match status" value="1"/>
</dbReference>
<dbReference type="FunFam" id="3.30.470.20:FF:000006">
    <property type="entry name" value="Phosphoribosylaminoimidazole-succinocarboxamide synthase"/>
    <property type="match status" value="1"/>
</dbReference>
<dbReference type="Gene3D" id="3.30.470.20">
    <property type="entry name" value="ATP-grasp fold, B domain"/>
    <property type="match status" value="1"/>
</dbReference>
<dbReference type="Gene3D" id="3.30.200.20">
    <property type="entry name" value="Phosphorylase Kinase, domain 1"/>
    <property type="match status" value="1"/>
</dbReference>
<dbReference type="HAMAP" id="MF_00137">
    <property type="entry name" value="SAICAR_synth"/>
    <property type="match status" value="1"/>
</dbReference>
<dbReference type="InterPro" id="IPR028923">
    <property type="entry name" value="SAICAR_synt/ADE2_N"/>
</dbReference>
<dbReference type="InterPro" id="IPR033934">
    <property type="entry name" value="SAICAR_synt_PurC"/>
</dbReference>
<dbReference type="InterPro" id="IPR001636">
    <property type="entry name" value="SAICAR_synth"/>
</dbReference>
<dbReference type="InterPro" id="IPR050089">
    <property type="entry name" value="SAICAR_synthetase"/>
</dbReference>
<dbReference type="InterPro" id="IPR018236">
    <property type="entry name" value="SAICAR_synthetase_CS"/>
</dbReference>
<dbReference type="NCBIfam" id="TIGR00081">
    <property type="entry name" value="purC"/>
    <property type="match status" value="1"/>
</dbReference>
<dbReference type="PANTHER" id="PTHR43599">
    <property type="entry name" value="MULTIFUNCTIONAL PROTEIN ADE2"/>
    <property type="match status" value="1"/>
</dbReference>
<dbReference type="PANTHER" id="PTHR43599:SF3">
    <property type="entry name" value="SI:DKEY-6E2.2"/>
    <property type="match status" value="1"/>
</dbReference>
<dbReference type="Pfam" id="PF01259">
    <property type="entry name" value="SAICAR_synt"/>
    <property type="match status" value="1"/>
</dbReference>
<dbReference type="SUPFAM" id="SSF56104">
    <property type="entry name" value="SAICAR synthase-like"/>
    <property type="match status" value="1"/>
</dbReference>
<dbReference type="PROSITE" id="PS01057">
    <property type="entry name" value="SAICAR_SYNTHETASE_1"/>
    <property type="match status" value="1"/>
</dbReference>
<organism>
    <name type="scientific">Brucella melitensis biotype 2 (strain ATCC 23457)</name>
    <dbReference type="NCBI Taxonomy" id="546272"/>
    <lineage>
        <taxon>Bacteria</taxon>
        <taxon>Pseudomonadati</taxon>
        <taxon>Pseudomonadota</taxon>
        <taxon>Alphaproteobacteria</taxon>
        <taxon>Hyphomicrobiales</taxon>
        <taxon>Brucellaceae</taxon>
        <taxon>Brucella/Ochrobactrum group</taxon>
        <taxon>Brucella</taxon>
    </lineage>
</organism>
<name>PUR7_BRUMB</name>
<protein>
    <recommendedName>
        <fullName evidence="1">Phosphoribosylaminoimidazole-succinocarboxamide synthase</fullName>
        <ecNumber evidence="1">6.3.2.6</ecNumber>
    </recommendedName>
    <alternativeName>
        <fullName evidence="1">SAICAR synthetase</fullName>
    </alternativeName>
</protein>
<reference key="1">
    <citation type="submission" date="2009-03" db="EMBL/GenBank/DDBJ databases">
        <title>Brucella melitensis ATCC 23457 whole genome shotgun sequencing project.</title>
        <authorList>
            <person name="Setubal J.C."/>
            <person name="Boyle S."/>
            <person name="Crasta O.R."/>
            <person name="Gillespie J.J."/>
            <person name="Kenyon R.W."/>
            <person name="Lu J."/>
            <person name="Mane S."/>
            <person name="Nagrani S."/>
            <person name="Shallom J.M."/>
            <person name="Shallom S."/>
            <person name="Shukla M."/>
            <person name="Snyder E.E."/>
            <person name="Sobral B.W."/>
            <person name="Wattam A.R."/>
            <person name="Will R."/>
            <person name="Williams K."/>
            <person name="Yoo H."/>
            <person name="Munk C."/>
            <person name="Tapia R."/>
            <person name="Han C."/>
            <person name="Detter J.C."/>
            <person name="Bruce D."/>
            <person name="Brettin T.S."/>
        </authorList>
    </citation>
    <scope>NUCLEOTIDE SEQUENCE [LARGE SCALE GENOMIC DNA]</scope>
    <source>
        <strain>ATCC 23457</strain>
    </source>
</reference>
<proteinExistence type="inferred from homology"/>
<gene>
    <name evidence="1" type="primary">purC</name>
    <name type="ordered locus">BMEA_A0881</name>
</gene>
<sequence length="254" mass="28937">MNRRRRIYEGKAKILYEGPEPGTLVQFFKDDATAFNAKKHEVIDGKGVLNNRISEHIFTQLNRIGIPTHFIRRLNMREQLIKEVEIIPLEVVVRNVAAGSLAKHLGLEEGTILPRSIIEFYYKADALDDPMVTEEHITAFGWASPQEIDDIMALAIRVNDFLTGLFLGIGIQLVDFKMECGRLWEGDMMRIVVADEISPDSARLWDITTNDKLDKDRFRRDMGGLVEAYQEVARRLGIMNENDTPRPSGPTLVK</sequence>
<accession>C0RIH6</accession>